<accession>Q9XJQ3</accession>
<organism>
    <name type="scientific">Enterobacteria phage P21</name>
    <name type="common">Bacteriophage 21</name>
    <name type="synonym">Bacteriophage P21</name>
    <dbReference type="NCBI Taxonomy" id="10711"/>
    <lineage>
        <taxon>Viruses</taxon>
        <taxon>Duplodnaviria</taxon>
        <taxon>Heunggongvirae</taxon>
        <taxon>Uroviricota</taxon>
        <taxon>Caudoviricetes</taxon>
        <taxon>Lambdavirus</taxon>
        <taxon>Lambdavirus lambda</taxon>
    </lineage>
</organism>
<organismHost>
    <name type="scientific">Escherichia coli</name>
    <dbReference type="NCBI Taxonomy" id="562"/>
</organismHost>
<proteinExistence type="inferred from homology"/>
<comment type="similarity">
    <text evidence="1">Belongs to the ninF family.</text>
</comment>
<gene>
    <name type="primary">ninF</name>
</gene>
<sequence>MIDPNRSYEQESVERALTCANCGQKLHVLEVHVCEYCCAELMSDSNSSMHEEEDDG</sequence>
<reference key="1">
    <citation type="submission" date="1999-03" db="EMBL/GenBank/DDBJ databases">
        <authorList>
            <person name="Kroeger M."/>
            <person name="Hobom G."/>
        </authorList>
    </citation>
    <scope>NUCLEOTIDE SEQUENCE [GENOMIC DNA]</scope>
</reference>
<protein>
    <recommendedName>
        <fullName>Protein ninF</fullName>
    </recommendedName>
</protein>
<dbReference type="EMBL" id="AJ237660">
    <property type="protein sequence ID" value="CAB39990.1"/>
    <property type="molecule type" value="Genomic_DNA"/>
</dbReference>
<dbReference type="InterPro" id="IPR008712">
    <property type="entry name" value="NinF"/>
</dbReference>
<dbReference type="Pfam" id="PF05810">
    <property type="entry name" value="NinF"/>
    <property type="match status" value="1"/>
</dbReference>
<feature type="chain" id="PRO_0000077623" description="Protein ninF">
    <location>
        <begin position="1"/>
        <end position="56"/>
    </location>
</feature>
<evidence type="ECO:0000305" key="1"/>
<name>NINF_BPP21</name>